<proteinExistence type="inferred from homology"/>
<feature type="chain" id="PRO_0000207879" description="Protein PsbN">
    <location>
        <begin position="1"/>
        <end position="43"/>
    </location>
</feature>
<feature type="transmembrane region" description="Helical" evidence="1">
    <location>
        <begin position="7"/>
        <end position="27"/>
    </location>
</feature>
<protein>
    <recommendedName>
        <fullName evidence="1">Protein PsbN</fullName>
    </recommendedName>
</protein>
<name>PSBN_CANWI</name>
<sequence>METATLVAIFISGLLVSFTGYALYTAFGQPSQQLRDPFEEHGD</sequence>
<evidence type="ECO:0000255" key="1">
    <source>
        <dbReference type="HAMAP-Rule" id="MF_00293"/>
    </source>
</evidence>
<gene>
    <name evidence="1" type="primary">psbN</name>
</gene>
<dbReference type="EMBL" id="AF528895">
    <property type="protein sequence ID" value="AAQ09367.1"/>
    <property type="molecule type" value="Genomic_DNA"/>
</dbReference>
<dbReference type="SMR" id="Q6EYK6"/>
<dbReference type="GO" id="GO:0009535">
    <property type="term" value="C:chloroplast thylakoid membrane"/>
    <property type="evidence" value="ECO:0007669"/>
    <property type="project" value="UniProtKB-SubCell"/>
</dbReference>
<dbReference type="GO" id="GO:0015979">
    <property type="term" value="P:photosynthesis"/>
    <property type="evidence" value="ECO:0007669"/>
    <property type="project" value="InterPro"/>
</dbReference>
<dbReference type="HAMAP" id="MF_00293">
    <property type="entry name" value="PSII_PsbN"/>
    <property type="match status" value="1"/>
</dbReference>
<dbReference type="InterPro" id="IPR003398">
    <property type="entry name" value="PSII_PsbN"/>
</dbReference>
<dbReference type="PANTHER" id="PTHR35326">
    <property type="entry name" value="PROTEIN PSBN"/>
    <property type="match status" value="1"/>
</dbReference>
<dbReference type="PANTHER" id="PTHR35326:SF3">
    <property type="entry name" value="PROTEIN PSBN"/>
    <property type="match status" value="1"/>
</dbReference>
<dbReference type="Pfam" id="PF02468">
    <property type="entry name" value="PsbN"/>
    <property type="match status" value="1"/>
</dbReference>
<organism>
    <name type="scientific">Canella winterana</name>
    <name type="common">Wild cinnamon</name>
    <name type="synonym">Laurus winterana</name>
    <dbReference type="NCBI Taxonomy" id="3426"/>
    <lineage>
        <taxon>Eukaryota</taxon>
        <taxon>Viridiplantae</taxon>
        <taxon>Streptophyta</taxon>
        <taxon>Embryophyta</taxon>
        <taxon>Tracheophyta</taxon>
        <taxon>Spermatophyta</taxon>
        <taxon>Magnoliopsida</taxon>
        <taxon>Magnoliidae</taxon>
        <taxon>Canellales</taxon>
        <taxon>Canellaceae</taxon>
        <taxon>Canella</taxon>
    </lineage>
</organism>
<accession>Q6EYK6</accession>
<keyword id="KW-0150">Chloroplast</keyword>
<keyword id="KW-0472">Membrane</keyword>
<keyword id="KW-0934">Plastid</keyword>
<keyword id="KW-0793">Thylakoid</keyword>
<keyword id="KW-0812">Transmembrane</keyword>
<keyword id="KW-1133">Transmembrane helix</keyword>
<reference key="1">
    <citation type="submission" date="2002-07" db="EMBL/GenBank/DDBJ databases">
        <title>Parsing out signal and noise for seed-plant phylogenetic inference.</title>
        <authorList>
            <person name="Graham S.W."/>
            <person name="Rai H.S."/>
            <person name="Ikegami K."/>
            <person name="Reeves P.A."/>
            <person name="Olmstead R.G."/>
        </authorList>
    </citation>
    <scope>NUCLEOTIDE SEQUENCE [GENOMIC DNA]</scope>
</reference>
<comment type="function">
    <text evidence="1">May play a role in photosystem I and II biogenesis.</text>
</comment>
<comment type="subcellular location">
    <subcellularLocation>
        <location evidence="1">Plastid</location>
        <location evidence="1">Chloroplast thylakoid membrane</location>
        <topology evidence="1">Single-pass membrane protein</topology>
    </subcellularLocation>
</comment>
<comment type="similarity">
    <text evidence="1">Belongs to the PsbN family.</text>
</comment>
<comment type="caution">
    <text evidence="1">Originally thought to be a component of PSII; based on experiments in Synechocystis, N.tabacum and barley, and its absence from PSII in T.elongatus and T.vulcanus, this is probably not true.</text>
</comment>
<geneLocation type="chloroplast"/>